<name>FTHS_CLOB1</name>
<reference key="1">
    <citation type="journal article" date="2007" name="PLoS ONE">
        <title>Analysis of the neurotoxin complex genes in Clostridium botulinum A1-A4 and B1 strains: BoNT/A3, /Ba4 and /B1 clusters are located within plasmids.</title>
        <authorList>
            <person name="Smith T.J."/>
            <person name="Hill K.K."/>
            <person name="Foley B.T."/>
            <person name="Detter J.C."/>
            <person name="Munk A.C."/>
            <person name="Bruce D.C."/>
            <person name="Doggett N.A."/>
            <person name="Smith L.A."/>
            <person name="Marks J.D."/>
            <person name="Xie G."/>
            <person name="Brettin T.S."/>
        </authorList>
    </citation>
    <scope>NUCLEOTIDE SEQUENCE [LARGE SCALE GENOMIC DNA]</scope>
    <source>
        <strain>ATCC 19397 / Type A</strain>
    </source>
</reference>
<gene>
    <name evidence="1" type="primary">fhs</name>
    <name type="ordered locus">CLB_3598</name>
</gene>
<organism>
    <name type="scientific">Clostridium botulinum (strain ATCC 19397 / Type A)</name>
    <dbReference type="NCBI Taxonomy" id="441770"/>
    <lineage>
        <taxon>Bacteria</taxon>
        <taxon>Bacillati</taxon>
        <taxon>Bacillota</taxon>
        <taxon>Clostridia</taxon>
        <taxon>Eubacteriales</taxon>
        <taxon>Clostridiaceae</taxon>
        <taxon>Clostridium</taxon>
    </lineage>
</organism>
<evidence type="ECO:0000255" key="1">
    <source>
        <dbReference type="HAMAP-Rule" id="MF_01543"/>
    </source>
</evidence>
<proteinExistence type="inferred from homology"/>
<sequence>MFKSDIEIAQESKMKNIKNIAEKIGLTEEDIDLYGKYKCKISLDVLKRNKDKKDGKLILVTAINPTPAGEGKSTVTVGLGQALWKKNKKAVIALREPSLGPVFGIKGGAAGGGYSQVVPMEDINLHFTGDMHAITSANNLLAAAIDNHIHQGNILKIDQRRILFKRVMDMNDRALRNVIVALGGKINGFPREDGFMITVASEIMAILCLAEDLMDLKNKMGEILVAYSTEGKPIYCEDLEVQGAMALLMKDAIKPNLVQTLENTPAIIHGGPFANIAHGCNSILGTKMALKLGDYVITEAGFGADLGAEKFFDIKCRKANLKPNCVVIVATVRALKYNGGIPKENLKEQNMEALSKGIKNLGKHIENVNKFGVPAVVAINKFISDTEEEIEFIKKYCKELGAEVSIAEVWEKGGNGGLELADKVLDTIENKESKFNPIYEETLSIKQKIETIAEEIYGAEGVDYSKEAEKQISEIEKLDLDKKPVCMAKTQYSLSDDAKLLGRPCGFRINVKEVRISNGAGFIVVLTGNVMTMPGLPKKPAANNMNVLSDGNIVGLF</sequence>
<dbReference type="EC" id="6.3.4.3" evidence="1"/>
<dbReference type="EMBL" id="CP000726">
    <property type="protein sequence ID" value="ABS33056.1"/>
    <property type="molecule type" value="Genomic_DNA"/>
</dbReference>
<dbReference type="RefSeq" id="WP_012048375.1">
    <property type="nucleotide sequence ID" value="NC_009697.1"/>
</dbReference>
<dbReference type="SMR" id="A7FZB0"/>
<dbReference type="KEGG" id="cba:CLB_3598"/>
<dbReference type="HOGENOM" id="CLU_003601_3_3_9"/>
<dbReference type="UniPathway" id="UPA00193"/>
<dbReference type="GO" id="GO:0005524">
    <property type="term" value="F:ATP binding"/>
    <property type="evidence" value="ECO:0007669"/>
    <property type="project" value="UniProtKB-UniRule"/>
</dbReference>
<dbReference type="GO" id="GO:0004329">
    <property type="term" value="F:formate-tetrahydrofolate ligase activity"/>
    <property type="evidence" value="ECO:0007669"/>
    <property type="project" value="UniProtKB-UniRule"/>
</dbReference>
<dbReference type="GO" id="GO:0035999">
    <property type="term" value="P:tetrahydrofolate interconversion"/>
    <property type="evidence" value="ECO:0007669"/>
    <property type="project" value="UniProtKB-UniRule"/>
</dbReference>
<dbReference type="CDD" id="cd00477">
    <property type="entry name" value="FTHFS"/>
    <property type="match status" value="1"/>
</dbReference>
<dbReference type="FunFam" id="3.30.1510.10:FF:000001">
    <property type="entry name" value="Formate--tetrahydrofolate ligase"/>
    <property type="match status" value="1"/>
</dbReference>
<dbReference type="FunFam" id="3.10.410.10:FF:000001">
    <property type="entry name" value="Putative formate--tetrahydrofolate ligase"/>
    <property type="match status" value="1"/>
</dbReference>
<dbReference type="Gene3D" id="3.30.1510.10">
    <property type="entry name" value="Domain 2, N(10)-formyltetrahydrofolate synthetase"/>
    <property type="match status" value="1"/>
</dbReference>
<dbReference type="Gene3D" id="3.10.410.10">
    <property type="entry name" value="Formyltetrahydrofolate synthetase, domain 3"/>
    <property type="match status" value="1"/>
</dbReference>
<dbReference type="Gene3D" id="3.40.50.300">
    <property type="entry name" value="P-loop containing nucleotide triphosphate hydrolases"/>
    <property type="match status" value="1"/>
</dbReference>
<dbReference type="HAMAP" id="MF_01543">
    <property type="entry name" value="FTHFS"/>
    <property type="match status" value="1"/>
</dbReference>
<dbReference type="InterPro" id="IPR000559">
    <property type="entry name" value="Formate_THF_ligase"/>
</dbReference>
<dbReference type="InterPro" id="IPR020628">
    <property type="entry name" value="Formate_THF_ligase_CS"/>
</dbReference>
<dbReference type="InterPro" id="IPR027417">
    <property type="entry name" value="P-loop_NTPase"/>
</dbReference>
<dbReference type="NCBIfam" id="NF010030">
    <property type="entry name" value="PRK13505.1"/>
    <property type="match status" value="1"/>
</dbReference>
<dbReference type="Pfam" id="PF01268">
    <property type="entry name" value="FTHFS"/>
    <property type="match status" value="1"/>
</dbReference>
<dbReference type="SUPFAM" id="SSF52540">
    <property type="entry name" value="P-loop containing nucleoside triphosphate hydrolases"/>
    <property type="match status" value="1"/>
</dbReference>
<dbReference type="PROSITE" id="PS00721">
    <property type="entry name" value="FTHFS_1"/>
    <property type="match status" value="1"/>
</dbReference>
<dbReference type="PROSITE" id="PS00722">
    <property type="entry name" value="FTHFS_2"/>
    <property type="match status" value="1"/>
</dbReference>
<protein>
    <recommendedName>
        <fullName evidence="1">Formate--tetrahydrofolate ligase</fullName>
        <ecNumber evidence="1">6.3.4.3</ecNumber>
    </recommendedName>
    <alternativeName>
        <fullName evidence="1">Formyltetrahydrofolate synthetase</fullName>
        <shortName evidence="1">FHS</shortName>
        <shortName evidence="1">FTHFS</shortName>
    </alternativeName>
</protein>
<comment type="catalytic activity">
    <reaction evidence="1">
        <text>(6S)-5,6,7,8-tetrahydrofolate + formate + ATP = (6R)-10-formyltetrahydrofolate + ADP + phosphate</text>
        <dbReference type="Rhea" id="RHEA:20221"/>
        <dbReference type="ChEBI" id="CHEBI:15740"/>
        <dbReference type="ChEBI" id="CHEBI:30616"/>
        <dbReference type="ChEBI" id="CHEBI:43474"/>
        <dbReference type="ChEBI" id="CHEBI:57453"/>
        <dbReference type="ChEBI" id="CHEBI:195366"/>
        <dbReference type="ChEBI" id="CHEBI:456216"/>
        <dbReference type="EC" id="6.3.4.3"/>
    </reaction>
</comment>
<comment type="pathway">
    <text evidence="1">One-carbon metabolism; tetrahydrofolate interconversion.</text>
</comment>
<comment type="similarity">
    <text evidence="1">Belongs to the formate--tetrahydrofolate ligase family.</text>
</comment>
<accession>A7FZB0</accession>
<keyword id="KW-0067">ATP-binding</keyword>
<keyword id="KW-0436">Ligase</keyword>
<keyword id="KW-0547">Nucleotide-binding</keyword>
<keyword id="KW-0554">One-carbon metabolism</keyword>
<feature type="chain" id="PRO_0000318566" description="Formate--tetrahydrofolate ligase">
    <location>
        <begin position="1"/>
        <end position="557"/>
    </location>
</feature>
<feature type="binding site" evidence="1">
    <location>
        <begin position="66"/>
        <end position="73"/>
    </location>
    <ligand>
        <name>ATP</name>
        <dbReference type="ChEBI" id="CHEBI:30616"/>
    </ligand>
</feature>